<evidence type="ECO:0000250" key="1">
    <source>
        <dbReference type="UniProtKB" id="Q8CE72"/>
    </source>
</evidence>
<evidence type="ECO:0000255" key="2"/>
<evidence type="ECO:0000256" key="3">
    <source>
        <dbReference type="SAM" id="MobiDB-lite"/>
    </source>
</evidence>
<evidence type="ECO:0000269" key="4">
    <source>
    </source>
</evidence>
<evidence type="ECO:0000269" key="5">
    <source>
    </source>
</evidence>
<evidence type="ECO:0000269" key="6">
    <source>
    </source>
</evidence>
<evidence type="ECO:0000269" key="7">
    <source>
    </source>
</evidence>
<evidence type="ECO:0000269" key="8">
    <source>
    </source>
</evidence>
<evidence type="ECO:0000269" key="9">
    <source>
    </source>
</evidence>
<evidence type="ECO:0000269" key="10">
    <source>
    </source>
</evidence>
<evidence type="ECO:0000269" key="11">
    <source>
    </source>
</evidence>
<evidence type="ECO:0000269" key="12">
    <source>
    </source>
</evidence>
<evidence type="ECO:0000269" key="13">
    <source>
    </source>
</evidence>
<evidence type="ECO:0000269" key="14">
    <source>
    </source>
</evidence>
<evidence type="ECO:0000269" key="15">
    <source>
    </source>
</evidence>
<evidence type="ECO:0000303" key="16">
    <source>
    </source>
</evidence>
<evidence type="ECO:0000305" key="17"/>
<evidence type="ECO:0000305" key="18">
    <source>
    </source>
</evidence>
<evidence type="ECO:0000312" key="19">
    <source>
        <dbReference type="HGNC" id="HGNC:25801"/>
    </source>
</evidence>
<evidence type="ECO:0007744" key="20">
    <source>
    </source>
</evidence>
<keyword id="KW-0025">Alternative splicing</keyword>
<keyword id="KW-0966">Cell projection</keyword>
<keyword id="KW-1186">Ciliopathy</keyword>
<keyword id="KW-0970">Cilium biogenesis/degradation</keyword>
<keyword id="KW-0175">Coiled coil</keyword>
<keyword id="KW-0225">Disease variant</keyword>
<keyword id="KW-0979">Joubert syndrome</keyword>
<keyword id="KW-0472">Membrane</keyword>
<keyword id="KW-0597">Phosphoprotein</keyword>
<keyword id="KW-1267">Proteomics identification</keyword>
<keyword id="KW-1185">Reference proteome</keyword>
<keyword id="KW-0812">Transmembrane</keyword>
<keyword id="KW-1133">Transmembrane helix</keyword>
<sequence length="3197" mass="361746">MEIRLEILTSTGIKQKKPWPRVSWLGKEKEAVFLLDDKFINEINLLSGKIKKKIPSLQPFLKDVIVLTTSSNDAWLAGVLTTGELFLWNKDQDCLKTIPITEKPKEMIKATVASSLRLYLYVSGNGKRIVLITPSGCIFLWEYLELKNILSSKSLSLAGRWSQVIPEEAVLLPSTEDKEAVVNAVFIKNELFGDCCLCSFTFYSGECLKLTFLAIRWHENVFTSVRSLPYHVHWAQQDCHLCSLIPKCESVKSRGALISAFSRDGLTLAVTLNQKDPKATQVLFINTLNFVTLCGSLKGCSNKSPVVPATLIRSYWVGDISWTHDSLFLACMLKRGSLVLLTCQGELLTLITFGCSIEFGPAEFIPLHPLITYRPQQFTFQDSNNSVDSSASDSDPMRQRFSIKAHSRLPYLVISDGYMVTTLRFLDSLSPSVHMRSLLLDSTQRLEKIYQSVILSKPKGKGLNLRSLNSLRSSLLEHQGNESSADFTVPKFLQAEETINENAADFQDFEAEETNEGRHFPDNLCPFWNKRDDVLCSSMKEGRLEFASMFDTIHAKDDSEETDRTITELHSIQKSLLAAWTIGISKTVTEKNLMLNYIVVCITHFFYILQFIKCPFPKLDLVLSKSSRHNAWILCIFQLFHQCLSIHYWDIRYKQDVGHLIKLTSNTVKLLLTQQQKGQLFSEKLLACFYLLKMVADNLNGVYILQPEVISASADGSKITAQDSLVVPIFQMFQDSGFQKNWSWNSFFKIHPQVVNPVQQPGHRLLILWRILYKKTLWYQAQLNRRVPEADSQLTEKMTHEASTVKSLLCHLQANLQSTGDCLNQTLELKSINGEECFLLGSYEKSVQLWKKALQEIEEKGGRRTYFLQIRYYLSLLYCHLYSYNLNDAQGLCDQLAREILRWSQLPVKENKDFSGAAKSHFECGMVGGVHPEAAVRVVQSMARFMAAYFTNQQLCILPPHHVNVLPPLHIKTEQSFRLIPLQHSKVASVVRDQNLSNVWTVEYALELLFIGGLVPEAVWLAYKLGDWKTSVSIGVAFQLFCKRDSNFMRSKKKSLNLPLRMTPAQIFQEKLQCVLGQPASLEAKNEMGSKYKQFTDPIEEEDANLLFGSVQEVLKASVMADADILSETFQLLIDSAKDFSKRLWGLVPFGLYLPAPPLYCPQPAILSEEDGDDLLLKAEKNNRQKVSGILQRVLLLFRAAQCSFPVAQWYILQLRWARKVMQKIRMKGSLPSLSPFPQSLLNYCKGGIAFFRPGAAGDHKLDEVSIRAIGCFRELCALCWMLHVRDKLSYSCRQYQKARENVKGEKDLEVEFDSCMIEHCLSAVEWAYRMLPFSRFFNMEELIQDIILSLIGELPPIRKVAEIFVKAFPYPEDVRVPLRDKYHSLHQRLRHCVVKGPQTEEMMSVVMHSIQKVRVKALKRVQRNIGSFEVNIWEPIEEEKPDEAPGVDRYSLGTSLSRSTLTELGDSVVHSDADTFSEALSVEEKSRINIYQRNAPNHMELTSIHKPTDKRKMCNQKENPTKKEDHEKLSQNTLPVIGVWEFERDDDEYIKFLDLFLSYILERDLPYSRDADIPFLTSFSGKLREHELNSLLFDVHTTLKRHQSKTKSQNVFRAGSCFVVAPESYESEKSSSLNDEYGMHLENQKLSSSVLVNQGIKPFLQYPSNEVNKNEGMSGLFGLKQRSIYKIQDDTREKCLIQRSSNHIFWTPKSIKTRRCIFKAIQCNDINPQEDLPLALNTFGSIGRLLEWMIRWSNRRLLCDSGITESSSEYSPVIRVKTSTAAILTSLWLLEQPYFATYKAKNAIIKMVENRDTGCQIGPNIERESKSDAGGSVAVATPGGTEERNGQNKSCQNILNRMPTEAKNPDIKEINDDIISITHNTKKEFIDIDENLLEVEAFTEEEMDMHISDYEEDIEESVGGFRSPSLAICMMTLPQQLEEEFTEEVQCQREEPLETIMEEKSTEQKGMIEAFSHPGHTTPQSMQVDTSSEISSAQISTYKEKSSSVPLLISNGVNVASQPPAPTPQKTQRNEFTAQLPDCSESVRQMLQDEMFKLVQLQQINFMSLMQIVGSSFANLPDTQQLVQQSQSVHLGESQESNLRGCGDVEDSNKNLKERFFIKPQSMGENAREPRKNSPHCHEGTIPSGQNSTGNVQNVPHGSIPLCQLNGQPRKKGPIPSSQNLPSTSFYPAPAGNTHLYLLSTPSVVQKAPRLIPHAKTFSPGDGFPLLQFKSKQEFQPLFLHTGSIPQVPFRPLPQPREAWGLSDSFQPALPQRAAQTTPASHLNVSQYNTEARKKEVEQKTWAETVITEIPNHVNLDQYVGQENLTPQQDSSVFIKPEKLFDVKPGTLEISPHHSFGLPLLYLPLKPPNMFPSTSRASITVPSTPIQPIAEERKYPRLSLLHSHLSPENRCKKTQLIPLENLIAFKQSQQKLTHNLFEQGDAGHLQLLKVKIEPPEVRQGKDSKKRQRRRAEKELQEKRCEKLRRKPNVTFRPENSIINNDDSEIIKKPKEQQEHCGSHPLDDFDVPFEMLQDDNTSAGLHFMASVKKKAIGSQDASTNTDPEHEPLTAPQLLVPDVYLNLKLSSEMSEKPWSPSIPHTVTNLELPVREEPSNDNVIKQQSDHLAVPSSAELHYMAASVTNAVPPHNFKSQGLPKPEFRFKGQSTKSDSAEDYLLWKRLQGVSAACPAPSSAAHQLEHLSAKLQKIDEQLLAIQNIAENIEQDFPKPEMLDLHCDKIGPVDHIEFSSGPEFKKTLASKTISISEEVRFLTHMDEEDQSDKKETSEPEFSITENYSGQKTCVFPTADSAVSLSSSSDQNTTSPGMNSSDELCESVSVHPLQMTGLTDIADIIDDLIIKDGVSSEELGLTEQAMGTSRIQHYSGRHSQRTDKERREIQAWMKRKRKERMAKYLNELAEKRGQEHDPFCPRSNPLYMTSREIRLRQKMKHEKDRLLLSEHYSRRISQAYGLMNELLSESVQLPTLPQKPLPNKPSPTQSSSCQHCPSPRGENQHGHSFLINRPGKVKYMSKPSYIHKRKSFGQPQGSPWPHGTATFTIQKKAGGAKAAVRKATQSPVTFQKGSNAPCHSLQHTKKHGSAGLAPQTKQVCVEYEREETVVSPWTIPSEIHKILHESHNSLLQDLSPTEEEEPEHPFGVGGVDSVSESTGSILSKLDWNAIEDMVASVEDQGLSVHWALDL</sequence>
<name>CPLN1_HUMAN</name>
<feature type="chain" id="PRO_0000332133" description="Ciliogenesis and planar polarity effector 1">
    <location>
        <begin position="1"/>
        <end position="3197"/>
    </location>
</feature>
<feature type="transmembrane region" description="Helical" evidence="2">
    <location>
        <begin position="592"/>
        <end position="612"/>
    </location>
</feature>
<feature type="transmembrane region" description="Helical" evidence="2">
    <location>
        <begin position="631"/>
        <end position="651"/>
    </location>
</feature>
<feature type="region of interest" description="Disordered" evidence="3">
    <location>
        <begin position="1822"/>
        <end position="1852"/>
    </location>
</feature>
<feature type="region of interest" description="Disordered" evidence="3">
    <location>
        <begin position="2118"/>
        <end position="2188"/>
    </location>
</feature>
<feature type="region of interest" description="Disordered" evidence="3">
    <location>
        <begin position="2453"/>
        <end position="2477"/>
    </location>
</feature>
<feature type="region of interest" description="Disordered" evidence="3">
    <location>
        <begin position="2771"/>
        <end position="2793"/>
    </location>
</feature>
<feature type="region of interest" description="Disordered" evidence="3">
    <location>
        <begin position="2810"/>
        <end position="2831"/>
    </location>
</feature>
<feature type="region of interest" description="Disordered" evidence="3">
    <location>
        <begin position="2982"/>
        <end position="3013"/>
    </location>
</feature>
<feature type="region of interest" description="Disordered" evidence="3">
    <location>
        <begin position="3140"/>
        <end position="3160"/>
    </location>
</feature>
<feature type="coiled-coil region" evidence="2">
    <location>
        <begin position="2457"/>
        <end position="2487"/>
    </location>
</feature>
<feature type="coiled-coil region" evidence="2">
    <location>
        <begin position="2691"/>
        <end position="2724"/>
    </location>
</feature>
<feature type="compositionally biased region" description="Basic and acidic residues" evidence="3">
    <location>
        <begin position="2127"/>
        <end position="2140"/>
    </location>
</feature>
<feature type="compositionally biased region" description="Polar residues" evidence="3">
    <location>
        <begin position="2144"/>
        <end position="2157"/>
    </location>
</feature>
<feature type="compositionally biased region" description="Polar residues" evidence="3">
    <location>
        <begin position="2177"/>
        <end position="2187"/>
    </location>
</feature>
<feature type="compositionally biased region" description="Basic and acidic residues" evidence="3">
    <location>
        <begin position="2453"/>
        <end position="2463"/>
    </location>
</feature>
<feature type="compositionally biased region" description="Basic and acidic residues" evidence="3">
    <location>
        <begin position="2771"/>
        <end position="2785"/>
    </location>
</feature>
<feature type="compositionally biased region" description="Polar residues" evidence="3">
    <location>
        <begin position="2817"/>
        <end position="2829"/>
    </location>
</feature>
<feature type="compositionally biased region" description="Polar residues" evidence="3">
    <location>
        <begin position="2993"/>
        <end position="3002"/>
    </location>
</feature>
<feature type="modified residue" description="Phosphoserine" evidence="20">
    <location>
        <position position="2407"/>
    </location>
</feature>
<feature type="splice variant" id="VSP_044052" description="In isoform 2." evidence="16">
    <original>L</original>
    <variation>LVGHTYINVIDIEANDLLQ</variation>
    <location>
        <position position="2604"/>
    </location>
</feature>
<feature type="splice variant" id="VSP_044053" description="In isoform 2." evidence="16">
    <original>Q</original>
    <variation>QEVTPACLDGKSLRAGITEVKEPSVTSPTPSDIQQNK</variation>
    <location>
        <position position="2652"/>
    </location>
</feature>
<feature type="splice variant" id="VSP_044054" description="In isoform 2." evidence="16">
    <original>RIQ</original>
    <variation>SFT</variation>
    <location>
        <begin position="2877"/>
        <end position="2879"/>
    </location>
</feature>
<feature type="splice variant" id="VSP_044055" description="In isoform 2." evidence="16">
    <location>
        <begin position="2880"/>
        <end position="3197"/>
    </location>
</feature>
<feature type="sequence variant" id="VAR_076776" evidence="11">
    <original>W</original>
    <variation>G</variation>
    <location>
        <position position="322"/>
    </location>
</feature>
<feature type="sequence variant" id="VAR_076777" description="In dbSNP:rs794727154." evidence="11">
    <original>S</original>
    <variation>F</variation>
    <location>
        <position position="875"/>
    </location>
</feature>
<feature type="sequence variant" id="VAR_072553" description="In OFD6; dbSNP:rs375009168." evidence="8">
    <original>S</original>
    <variation>L</variation>
    <location>
        <position position="1127"/>
    </location>
</feature>
<feature type="sequence variant" id="VAR_089421" description="In OFD6; uncertain significance." evidence="14">
    <original>E</original>
    <variation>A</variation>
    <location>
        <position position="1180"/>
    </location>
</feature>
<feature type="sequence variant" id="VAR_072554" description="In OFD6; dbSNP:rs1434631255." evidence="8">
    <original>R</original>
    <variation>C</variation>
    <location>
        <position position="1184"/>
    </location>
</feature>
<feature type="sequence variant" id="VAR_089422" description="In OFD6; likely pathogenic; dbSNP:rs548645125." evidence="9">
    <original>R</original>
    <variation>H</variation>
    <location>
        <position position="1184"/>
    </location>
</feature>
<feature type="sequence variant" id="VAR_072555" description="In OFD6; dbSNP:rs149170427." evidence="8">
    <original>R</original>
    <variation>C</variation>
    <location>
        <position position="1193"/>
    </location>
</feature>
<feature type="sequence variant" id="VAR_076778" evidence="11">
    <original>L</original>
    <variation>R</variation>
    <location>
        <position position="1196"/>
    </location>
</feature>
<feature type="sequence variant" id="VAR_089423" description="In OFD6; uncertain significance; dbSNP:rs569380288." evidence="14">
    <original>R</original>
    <variation>P</variation>
    <location>
        <position position="1199"/>
    </location>
</feature>
<feature type="sequence variant" id="VAR_089424" description="In OFD6; likely pathogenic; dbSNP:rs141153181." evidence="14">
    <original>A</original>
    <variation>E</variation>
    <location>
        <position position="1200"/>
    </location>
</feature>
<feature type="sequence variant" id="VAR_077558" description="In OFD6; pathogenic; dbSNP:rs141153181." evidence="9 13 15">
    <original>A</original>
    <variation>V</variation>
    <location>
        <position position="1200"/>
    </location>
</feature>
<feature type="sequence variant" id="VAR_072556" description="In OFD6; dbSNP:rs606231261." evidence="8">
    <original>D</original>
    <variation>H</variation>
    <location>
        <position position="1287"/>
    </location>
</feature>
<feature type="sequence variant" id="VAR_068165" description="In JBTS17; dbSNP:rs367543061." evidence="6 12">
    <original>R</original>
    <variation>W</variation>
    <location>
        <position position="1336"/>
    </location>
</feature>
<feature type="sequence variant" id="VAR_076779" description="In OFD6; dbSNP:rs869312898." evidence="9 10">
    <original>Q</original>
    <variation>R</variation>
    <location>
        <position position="1345"/>
    </location>
</feature>
<feature type="sequence variant" id="VAR_042948" description="In dbSNP:rs6859950.">
    <original>I</original>
    <variation>T</variation>
    <location>
        <position position="1437"/>
    </location>
</feature>
<feature type="sequence variant" id="VAR_076780" description="In dbSNP:rs79377186." evidence="11">
    <original>S</original>
    <variation>G</variation>
    <location>
        <position position="1772"/>
    </location>
</feature>
<feature type="sequence variant" id="VAR_068166" description="Probable risk factor for monomelic amyotrophy; dbSNP:rs75589774." evidence="4 5">
    <original>P</original>
    <variation>L</variation>
    <location>
        <position position="1794"/>
    </location>
</feature>
<feature type="sequence variant" id="VAR_042949" description="In dbSNP:rs10076911." evidence="4">
    <original>F</original>
    <variation>C</variation>
    <location>
        <position position="2033"/>
    </location>
</feature>
<feature type="sequence variant" id="VAR_068167" description="In dbSNP:rs10076911.">
    <original>F</original>
    <variation>S</variation>
    <location>
        <position position="2033"/>
    </location>
</feature>
<feature type="sequence variant" id="VAR_042950" description="In dbSNP:rs6884652.">
    <original>I</original>
    <variation>V</variation>
    <location>
        <position position="2143"/>
    </location>
</feature>
<feature type="sequence variant" id="VAR_089425" description="In OFD6; likely pathogenic." evidence="14">
    <location>
        <begin position="2154"/>
        <end position="3197"/>
    </location>
</feature>
<feature type="sequence variant" id="VAR_042951" description="In dbSNP:rs16903518.">
    <original>P</original>
    <variation>L</variation>
    <location>
        <position position="2592"/>
    </location>
</feature>
<feature type="sequence variant" id="VAR_089426" description="In OFD6; likely pathogenic." evidence="9">
    <location>
        <begin position="2606"/>
        <end position="3197"/>
    </location>
</feature>
<feature type="sequence variant" id="VAR_076781" description="In dbSNP:rs377107065." evidence="11">
    <original>P</original>
    <variation>S</variation>
    <location>
        <position position="2750"/>
    </location>
</feature>
<feature type="sequence variant" id="VAR_072544" description="In OFD6." evidence="8">
    <original>V</original>
    <variation>L</variation>
    <location>
        <position position="2837"/>
    </location>
</feature>
<feature type="sequence variant" id="VAR_042952" description="In dbSNP:rs7702892.">
    <original>G</original>
    <variation>R</variation>
    <location>
        <position position="3062"/>
    </location>
</feature>
<feature type="sequence conflict" description="In Ref. 1; AAI44070/AAI50595." evidence="17" ref="1">
    <original>L</original>
    <variation>S</variation>
    <location>
        <position position="1788"/>
    </location>
</feature>
<feature type="sequence conflict" description="In Ref. 2; BAB14999." evidence="17" ref="2">
    <original>N</original>
    <variation>D</variation>
    <location>
        <position position="2325"/>
    </location>
</feature>
<feature type="sequence conflict" description="In Ref. 2; BAC04822." evidence="17" ref="2">
    <original>P</original>
    <variation>L</variation>
    <location>
        <position position="2612"/>
    </location>
</feature>
<feature type="sequence conflict" description="In Ref. 2; BAC04822." evidence="17" ref="2">
    <original>V</original>
    <variation>A</variation>
    <location>
        <position position="2767"/>
    </location>
</feature>
<feature type="sequence conflict" description="In Ref. 2; BAB15539." evidence="17" ref="2">
    <original>E</original>
    <variation>G</variation>
    <location>
        <position position="2786"/>
    </location>
</feature>
<feature type="sequence conflict" description="In Ref. 1; AAH74774." evidence="17" ref="1">
    <original>VS</original>
    <variation>CQ</variation>
    <location>
        <begin position="2810"/>
        <end position="2811"/>
    </location>
</feature>
<feature type="sequence conflict" description="In Ref. 2; BAB15539." evidence="17" ref="2">
    <original>S</original>
    <variation>R</variation>
    <location>
        <position position="2828"/>
    </location>
</feature>
<feature type="sequence conflict" description="In Ref. 2; BAB15539." evidence="17" ref="2">
    <original>L</original>
    <variation>W</variation>
    <location>
        <position position="2831"/>
    </location>
</feature>
<feature type="sequence variant" id="VAR_082878" description="In JBTS17." evidence="6">
    <original>A</original>
    <variation>T</variation>
    <location sequence="Q9H799-5">
        <position position="2684"/>
    </location>
</feature>
<protein>
    <recommendedName>
        <fullName evidence="17">Ciliogenesis and planar polarity effector 1</fullName>
    </recommendedName>
    <alternativeName>
        <fullName>Protein JBTS17</fullName>
    </alternativeName>
</protein>
<proteinExistence type="evidence at protein level"/>
<reference key="1">
    <citation type="journal article" date="2004" name="Nature">
        <title>The DNA sequence and comparative analysis of human chromosome 5.</title>
        <authorList>
            <person name="Schmutz J."/>
            <person name="Martin J."/>
            <person name="Terry A."/>
            <person name="Couronne O."/>
            <person name="Grimwood J."/>
            <person name="Lowry S."/>
            <person name="Gordon L.A."/>
            <person name="Scott D."/>
            <person name="Xie G."/>
            <person name="Huang W."/>
            <person name="Hellsten U."/>
            <person name="Tran-Gyamfi M."/>
            <person name="She X."/>
            <person name="Prabhakar S."/>
            <person name="Aerts A."/>
            <person name="Altherr M."/>
            <person name="Bajorek E."/>
            <person name="Black S."/>
            <person name="Branscomb E."/>
            <person name="Caoile C."/>
            <person name="Challacombe J.F."/>
            <person name="Chan Y.M."/>
            <person name="Denys M."/>
            <person name="Detter J.C."/>
            <person name="Escobar J."/>
            <person name="Flowers D."/>
            <person name="Fotopulos D."/>
            <person name="Glavina T."/>
            <person name="Gomez M."/>
            <person name="Gonzales E."/>
            <person name="Goodstein D."/>
            <person name="Grigoriev I."/>
            <person name="Groza M."/>
            <person name="Hammon N."/>
            <person name="Hawkins T."/>
            <person name="Haydu L."/>
            <person name="Israni S."/>
            <person name="Jett J."/>
            <person name="Kadner K."/>
            <person name="Kimball H."/>
            <person name="Kobayashi A."/>
            <person name="Lopez F."/>
            <person name="Lou Y."/>
            <person name="Martinez D."/>
            <person name="Medina C."/>
            <person name="Morgan J."/>
            <person name="Nandkeshwar R."/>
            <person name="Noonan J.P."/>
            <person name="Pitluck S."/>
            <person name="Pollard M."/>
            <person name="Predki P."/>
            <person name="Priest J."/>
            <person name="Ramirez L."/>
            <person name="Retterer J."/>
            <person name="Rodriguez A."/>
            <person name="Rogers S."/>
            <person name="Salamov A."/>
            <person name="Salazar A."/>
            <person name="Thayer N."/>
            <person name="Tice H."/>
            <person name="Tsai M."/>
            <person name="Ustaszewska A."/>
            <person name="Vo N."/>
            <person name="Wheeler J."/>
            <person name="Wu K."/>
            <person name="Yang J."/>
            <person name="Dickson M."/>
            <person name="Cheng J.-F."/>
            <person name="Eichler E.E."/>
            <person name="Olsen A."/>
            <person name="Pennacchio L.A."/>
            <person name="Rokhsar D.S."/>
            <person name="Richardson P."/>
            <person name="Lucas S.M."/>
            <person name="Myers R.M."/>
            <person name="Rubin E.M."/>
        </authorList>
    </citation>
    <scope>NUCLEOTIDE SEQUENCE [LARGE SCALE GENOMIC DNA]</scope>
</reference>
<reference key="2">
    <citation type="journal article" date="2004" name="Genome Res.">
        <title>The status, quality, and expansion of the NIH full-length cDNA project: the Mammalian Gene Collection (MGC).</title>
        <authorList>
            <consortium name="The MGC Project Team"/>
        </authorList>
    </citation>
    <scope>NUCLEOTIDE SEQUENCE [LARGE SCALE MRNA] OF 953-3197 (ISOFORM 1)</scope>
    <scope>VARIANTS LEU-1794 AND CYS-2033</scope>
    <source>
        <tissue>Cerebellum</tissue>
        <tissue>Embryonic brain</tissue>
        <tissue>Testis</tissue>
    </source>
</reference>
<reference key="3">
    <citation type="journal article" date="2004" name="Nat. Genet.">
        <title>Complete sequencing and characterization of 21,243 full-length human cDNAs.</title>
        <authorList>
            <person name="Ota T."/>
            <person name="Suzuki Y."/>
            <person name="Nishikawa T."/>
            <person name="Otsuki T."/>
            <person name="Sugiyama T."/>
            <person name="Irie R."/>
            <person name="Wakamatsu A."/>
            <person name="Hayashi K."/>
            <person name="Sato H."/>
            <person name="Nagai K."/>
            <person name="Kimura K."/>
            <person name="Makita H."/>
            <person name="Sekine M."/>
            <person name="Obayashi M."/>
            <person name="Nishi T."/>
            <person name="Shibahara T."/>
            <person name="Tanaka T."/>
            <person name="Ishii S."/>
            <person name="Yamamoto J."/>
            <person name="Saito K."/>
            <person name="Kawai Y."/>
            <person name="Isono Y."/>
            <person name="Nakamura Y."/>
            <person name="Nagahari K."/>
            <person name="Murakami K."/>
            <person name="Yasuda T."/>
            <person name="Iwayanagi T."/>
            <person name="Wagatsuma M."/>
            <person name="Shiratori A."/>
            <person name="Sudo H."/>
            <person name="Hosoiri T."/>
            <person name="Kaku Y."/>
            <person name="Kodaira H."/>
            <person name="Kondo H."/>
            <person name="Sugawara M."/>
            <person name="Takahashi M."/>
            <person name="Kanda K."/>
            <person name="Yokoi T."/>
            <person name="Furuya T."/>
            <person name="Kikkawa E."/>
            <person name="Omura Y."/>
            <person name="Abe K."/>
            <person name="Kamihara K."/>
            <person name="Katsuta N."/>
            <person name="Sato K."/>
            <person name="Tanikawa M."/>
            <person name="Yamazaki M."/>
            <person name="Ninomiya K."/>
            <person name="Ishibashi T."/>
            <person name="Yamashita H."/>
            <person name="Murakawa K."/>
            <person name="Fujimori K."/>
            <person name="Tanai H."/>
            <person name="Kimata M."/>
            <person name="Watanabe M."/>
            <person name="Hiraoka S."/>
            <person name="Chiba Y."/>
            <person name="Ishida S."/>
            <person name="Ono Y."/>
            <person name="Takiguchi S."/>
            <person name="Watanabe S."/>
            <person name="Yosida M."/>
            <person name="Hotuta T."/>
            <person name="Kusano J."/>
            <person name="Kanehori K."/>
            <person name="Takahashi-Fujii A."/>
            <person name="Hara H."/>
            <person name="Tanase T.-O."/>
            <person name="Nomura Y."/>
            <person name="Togiya S."/>
            <person name="Komai F."/>
            <person name="Hara R."/>
            <person name="Takeuchi K."/>
            <person name="Arita M."/>
            <person name="Imose N."/>
            <person name="Musashino K."/>
            <person name="Yuuki H."/>
            <person name="Oshima A."/>
            <person name="Sasaki N."/>
            <person name="Aotsuka S."/>
            <person name="Yoshikawa Y."/>
            <person name="Matsunawa H."/>
            <person name="Ichihara T."/>
            <person name="Shiohata N."/>
            <person name="Sano S."/>
            <person name="Moriya S."/>
            <person name="Momiyama H."/>
            <person name="Satoh N."/>
            <person name="Takami S."/>
            <person name="Terashima Y."/>
            <person name="Suzuki O."/>
            <person name="Nakagawa S."/>
            <person name="Senoh A."/>
            <person name="Mizoguchi H."/>
            <person name="Goto Y."/>
            <person name="Shimizu F."/>
            <person name="Wakebe H."/>
            <person name="Hishigaki H."/>
            <person name="Watanabe T."/>
            <person name="Sugiyama A."/>
            <person name="Takemoto M."/>
            <person name="Kawakami B."/>
            <person name="Yamazaki M."/>
            <person name="Watanabe K."/>
            <person name="Kumagai A."/>
            <person name="Itakura S."/>
            <person name="Fukuzumi Y."/>
            <person name="Fujimori Y."/>
            <person name="Komiyama M."/>
            <person name="Tashiro H."/>
            <person name="Tanigami A."/>
            <person name="Fujiwara T."/>
            <person name="Ono T."/>
            <person name="Yamada K."/>
            <person name="Fujii Y."/>
            <person name="Ozaki K."/>
            <person name="Hirao M."/>
            <person name="Ohmori Y."/>
            <person name="Kawabata A."/>
            <person name="Hikiji T."/>
            <person name="Kobatake N."/>
            <person name="Inagaki H."/>
            <person name="Ikema Y."/>
            <person name="Okamoto S."/>
            <person name="Okitani R."/>
            <person name="Kawakami T."/>
            <person name="Noguchi S."/>
            <person name="Itoh T."/>
            <person name="Shigeta K."/>
            <person name="Senba T."/>
            <person name="Matsumura K."/>
            <person name="Nakajima Y."/>
            <person name="Mizuno T."/>
            <person name="Morinaga M."/>
            <person name="Sasaki M."/>
            <person name="Togashi T."/>
            <person name="Oyama M."/>
            <person name="Hata H."/>
            <person name="Watanabe M."/>
            <person name="Komatsu T."/>
            <person name="Mizushima-Sugano J."/>
            <person name="Satoh T."/>
            <person name="Shirai Y."/>
            <person name="Takahashi Y."/>
            <person name="Nakagawa K."/>
            <person name="Okumura K."/>
            <person name="Nagase T."/>
            <person name="Nomura N."/>
            <person name="Kikuchi H."/>
            <person name="Masuho Y."/>
            <person name="Yamashita R."/>
            <person name="Nakai K."/>
            <person name="Yada T."/>
            <person name="Nakamura Y."/>
            <person name="Ohara O."/>
            <person name="Isogai T."/>
            <person name="Sugano S."/>
        </authorList>
    </citation>
    <scope>NUCLEOTIDE SEQUENCE [LARGE SCALE MRNA] OF 1871-2391 (ISOFORMS 1/2)</scope>
    <scope>NUCLEOTIDE SEQUENCE [LARGE SCALE MRNA] OF 2561-2879 (ISOFORM 2)</scope>
    <scope>NUCLEOTIDE SEQUENCE [LARGE SCALE MRNA] OF 2781-3197 (ISOFORM 1)</scope>
    <source>
        <tissue>Brain</tissue>
        <tissue>Lung</tissue>
        <tissue>Ovary</tissue>
    </source>
</reference>
<reference key="4">
    <citation type="journal article" date="2012" name="J. Med. Genet.">
        <title>Mutations in TMEM231 cause Joubert syndrome in French Canadians.</title>
        <authorList>
            <consortium name="FORGE Canada Consortium"/>
            <person name="Srour M."/>
            <person name="Hamdan F.F."/>
            <person name="Schwartzentruber J.A."/>
            <person name="Patry L."/>
            <person name="Ospina L.H."/>
            <person name="Shevell M.I."/>
            <person name="Desilets V."/>
            <person name="Dobrzeniecka S."/>
            <person name="Mathonnet G."/>
            <person name="Lemyre E."/>
            <person name="Massicotte C."/>
            <person name="Labuda D."/>
            <person name="Amrom D."/>
            <person name="Andermann E."/>
            <person name="Sebire G."/>
            <person name="Maranda B."/>
            <person name="Rouleau G.A."/>
            <person name="Majewski J."/>
            <person name="Michaud J.L."/>
        </authorList>
    </citation>
    <scope>INVOLVEMENT IN JBTS17</scope>
</reference>
<reference key="5">
    <citation type="journal article" date="2013" name="J. Proteome Res.">
        <title>Toward a comprehensive characterization of a human cancer cell phosphoproteome.</title>
        <authorList>
            <person name="Zhou H."/>
            <person name="Di Palma S."/>
            <person name="Preisinger C."/>
            <person name="Peng M."/>
            <person name="Polat A.N."/>
            <person name="Heck A.J."/>
            <person name="Mohammed S."/>
        </authorList>
    </citation>
    <scope>PHOSPHORYLATION [LARGE SCALE ANALYSIS] AT SER-2407</scope>
    <scope>IDENTIFICATION BY MASS SPECTROMETRY [LARGE SCALE ANALYSIS]</scope>
    <source>
        <tissue>Cervix carcinoma</tissue>
    </source>
</reference>
<reference key="6">
    <citation type="journal article" date="2014" name="Hum. Genet.">
        <title>C5orf42 is the major gene responsible for OFD syndrome type VI.</title>
        <authorList>
            <person name="Lopez E."/>
            <person name="Thauvin-Robinet C."/>
            <person name="Reversade B."/>
            <person name="Khartoufi N.E."/>
            <person name="Devisme L."/>
            <person name="Holder M."/>
            <person name="Ansart-Franquet H."/>
            <person name="Avila M."/>
            <person name="Lacombe D."/>
            <person name="Kleinfinger P."/>
            <person name="Kaori I."/>
            <person name="Takanashi J."/>
            <person name="Le Merrer M."/>
            <person name="Martinovic J."/>
            <person name="Noel C."/>
            <person name="Shboul M."/>
            <person name="Ho L."/>
            <person name="Guven Y."/>
            <person name="Razavi F."/>
            <person name="Burglen L."/>
            <person name="Gigot N."/>
            <person name="Darmency-Stamboul V."/>
            <person name="Thevenon J."/>
            <person name="Aral B."/>
            <person name="Kayserili H."/>
            <person name="Huet F."/>
            <person name="Lyonnet S."/>
            <person name="Le Caignec C."/>
            <person name="Franco B."/>
            <person name="Riviere J.B."/>
            <person name="Faivre L."/>
            <person name="Attie-Bitach T."/>
        </authorList>
    </citation>
    <scope>INVOLVEMENT IN OFD6</scope>
    <scope>VARIANTS OFD6 LEU-1127; CYS-1184; CYS-1193; HIS-1287 AND LEU-2837</scope>
</reference>
<reference key="7">
    <citation type="journal article" date="2015" name="Hum. Mol. Genet.">
        <title>Novel Jbts17 mutant mouse model of Joubert syndrome with cilia transition zone defects and cerebellar and other ciliopathy related anomalies.</title>
        <authorList>
            <person name="Damerla R.R."/>
            <person name="Cui C."/>
            <person name="Gabriel G.C."/>
            <person name="Liu X."/>
            <person name="Craige B."/>
            <person name="Gibbs B.C."/>
            <person name="Francis R."/>
            <person name="Li Y."/>
            <person name="Chatterjee B."/>
            <person name="San Agustin J.T."/>
            <person name="Eguether T."/>
            <person name="Subramanian R."/>
            <person name="Witman G.B."/>
            <person name="Michaud J.L."/>
            <person name="Pazour G.J."/>
            <person name="Lo C.W."/>
        </authorList>
    </citation>
    <scope>FUNCTION</scope>
</reference>
<reference key="8">
    <citation type="journal article" date="2012" name="Am. J. Hum. Genet.">
        <title>Mutations in C5ORF42 cause Joubert syndrome in the French Canadian population.</title>
        <authorList>
            <person name="Srour M."/>
            <person name="Schwartzentruber J."/>
            <person name="Hamdan F.F."/>
            <person name="Ospina L.H."/>
            <person name="Patry L."/>
            <person name="Labuda D."/>
            <person name="Massicotte C."/>
            <person name="Dobrzeniecka S."/>
            <person name="Capo-Chichi J.M."/>
            <person name="Papillon-Cavanagh S."/>
            <person name="Samuels M.E."/>
            <person name="Boycott K.M."/>
            <person name="Shevell M.I."/>
            <person name="Laframboise R."/>
            <person name="Desilets V."/>
            <person name="Maranda B."/>
            <person name="Rouleau G.A."/>
            <person name="Majewski J."/>
            <person name="Michaud J.L."/>
        </authorList>
    </citation>
    <scope>VARIANT JBTS17 TRP-1336</scope>
    <scope>ALTERNATIVE SPLICING</scope>
</reference>
<reference key="9">
    <citation type="journal article" date="2012" name="Neuromuscul. Disord.">
        <title>Exome sequencing identifies KIAA1377 and C5orf42 as susceptibility genes for monomelic amyotrophy.</title>
        <authorList>
            <person name="Lim Y.M."/>
            <person name="Koh I."/>
            <person name="Park Y.M."/>
            <person name="Kim J.J."/>
            <person name="Kim D.S."/>
            <person name="Kim H.J."/>
            <person name="Baik K.H."/>
            <person name="Choi H.Y."/>
            <person name="Yang G.S."/>
            <person name="Also-Rallo E."/>
            <person name="Tizzano E.F."/>
            <person name="Gamez J."/>
            <person name="Park K."/>
            <person name="Yoo H.W."/>
            <person name="Lee J.K."/>
            <person name="Kim K.K."/>
        </authorList>
    </citation>
    <scope>VARIANT LEU-1794</scope>
</reference>
<reference key="10">
    <citation type="journal article" date="2015" name="Am. J. Hum. Genet.">
        <title>Joubert Syndrome in French Canadians and Identification of Mutations in CEP104.</title>
        <authorList>
            <consortium name="Care4Rare Canada Consortium"/>
            <person name="Srour M."/>
            <person name="Hamdan F.F."/>
            <person name="McKnight D."/>
            <person name="Davis E."/>
            <person name="Mandel H."/>
            <person name="Schwartzentruber J."/>
            <person name="Martin B."/>
            <person name="Patry L."/>
            <person name="Nassif C."/>
            <person name="Dionne-Laporte A."/>
            <person name="Ospina L.H."/>
            <person name="Lemyre E."/>
            <person name="Massicotte C."/>
            <person name="Laframboise R."/>
            <person name="Maranda B."/>
            <person name="Labuda D."/>
            <person name="Decarie J.C."/>
            <person name="Rypens F."/>
            <person name="Goldsher D."/>
            <person name="Fallet-Bianco C."/>
            <person name="Soucy J.F."/>
            <person name="Laberge A.M."/>
            <person name="Maftei C."/>
            <person name="Boycott K."/>
            <person name="Brais B."/>
            <person name="Boucher R.M."/>
            <person name="Rouleau G.A."/>
            <person name="Katsanis N."/>
            <person name="Majewski J."/>
            <person name="Elpeleg O."/>
            <person name="Kukolich M.K."/>
            <person name="Shalev S."/>
            <person name="Michaud J.L."/>
        </authorList>
    </citation>
    <scope>VARIANT JBTS17 TRP-1336</scope>
</reference>
<reference key="11">
    <citation type="journal article" date="2015" name="Am. J. Med. Genet. A">
        <title>Exome sequencing identifies a homozygous C5orf42 variant in a Turkish kindred with oral-facial-digital syndrome type VI.</title>
        <authorList>
            <person name="Bayram Y."/>
            <person name="Aydin H."/>
            <person name="Gambin T."/>
            <person name="Akdemir Z.C."/>
            <person name="Atik M.M."/>
            <person name="Karaca E."/>
            <person name="Karaman A."/>
            <person name="Pehlivan D."/>
            <person name="Jhangiani S.N."/>
            <person name="Gibbs R.A."/>
            <person name="Lupski J.R."/>
        </authorList>
    </citation>
    <scope>VARIANT OFD6 ARG-1345</scope>
    <scope>INVOLVEMENT IN OFD6</scope>
</reference>
<reference key="12">
    <citation type="journal article" date="2015" name="Hum. Genet.">
        <title>Oral-facial-digital syndrome type VI: is C5orf42 really the major gene?</title>
        <authorList>
            <person name="Romani M."/>
            <person name="Mancini F."/>
            <person name="Micalizzi A."/>
            <person name="Poretti A."/>
            <person name="Miccinilli E."/>
            <person name="Accorsi P."/>
            <person name="Avola E."/>
            <person name="Bertini E."/>
            <person name="Borgatti R."/>
            <person name="Romaniello R."/>
            <person name="Ceylaner S."/>
            <person name="Coppola G."/>
            <person name="D'Arrigo S."/>
            <person name="Giordano L."/>
            <person name="Janecke A.R."/>
            <person name="Lituania M."/>
            <person name="Ludwig K."/>
            <person name="Martorell L."/>
            <person name="Mazza T."/>
            <person name="Odent S."/>
            <person name="Pinelli L."/>
            <person name="Poo P."/>
            <person name="Santucci M."/>
            <person name="Signorini S."/>
            <person name="Simonati A."/>
            <person name="Spiegel R."/>
            <person name="Stanzial F."/>
            <person name="Steinlin M."/>
            <person name="Tabarki B."/>
            <person name="Wolf N.I."/>
            <person name="Zibordi F."/>
            <person name="Boltshauser E."/>
            <person name="Valente E.M."/>
        </authorList>
    </citation>
    <scope>VARIANTS OFD6 HIS-1184; VAL-1200; ARG-1345 AND 2606-LEU--LEU-3197 DEL</scope>
    <scope>INVOLVEMENT IN OFD6</scope>
</reference>
<reference key="13">
    <citation type="journal article" date="2015" name="Hum. Genome Var.">
        <title>Exome sequencing identifies novel mutations in C5orf42 in patients with Joubert syndrome with oral-facial-digital anomalies.</title>
        <authorList>
            <person name="Wentzensen I.M."/>
            <person name="Johnston J.J."/>
            <person name="Keppler-Noreuil K."/>
            <person name="Acrich K."/>
            <person name="David K."/>
            <person name="Johnson K.D."/>
            <person name="Graham J.M. Jr."/>
            <person name="Sapp J.C."/>
            <person name="Biesecker L.G."/>
        </authorList>
    </citation>
    <scope>VARIANT OFD6 VAL-1200</scope>
    <scope>INVOLVEMENT IN OFD6</scope>
</reference>
<reference key="14">
    <citation type="journal article" date="2016" name="Eur. J. Hum. Genet.">
        <title>Joubert syndrome: genotyping a Northern European patient cohort.</title>
        <authorList>
            <person name="Kroes H.Y."/>
            <person name="Monroe G.R."/>
            <person name="van der Zwaag B."/>
            <person name="Duran K.J."/>
            <person name="de Kovel C.G."/>
            <person name="van Roosmalen M.J."/>
            <person name="Harakalova M."/>
            <person name="Nijman I.J."/>
            <person name="Kloosterman W.P."/>
            <person name="Giles R.H."/>
            <person name="Knoers N.V."/>
            <person name="van Haaften G."/>
        </authorList>
    </citation>
    <scope>VARIANTS GLY-322; PHE-875; ARG-1196; GLY-1772 AND SER-2750</scope>
</reference>
<reference key="15">
    <citation type="journal article" date="2018" name="Eur. J. Med. Genet.">
        <title>Novel mutations in the ciliopathy-associated gene CPLANE1 (C5orf42) cause OFD syndrome type VI rather than Joubert syndrome.</title>
        <authorList>
            <person name="Bonnard C."/>
            <person name="Shboul M."/>
            <person name="Tonekaboni S.H."/>
            <person name="Ng A.Y.J."/>
            <person name="Tohari S."/>
            <person name="Ghosh K."/>
            <person name="Lai A."/>
            <person name="Lim J.Y."/>
            <person name="Tan E.C."/>
            <person name="Devisme L."/>
            <person name="Stichelbout M."/>
            <person name="Alkindi A."/>
            <person name="Banu N."/>
            <person name="Yueksel Z."/>
            <person name="Ghoumid J."/>
            <person name="Elkhartoufi N."/>
            <person name="Boutaud L."/>
            <person name="Micalizzi A."/>
            <person name="Brett M.S."/>
            <person name="Venkatesh B."/>
            <person name="Valente E.M."/>
            <person name="Attie-Bitach T."/>
            <person name="Reversade B."/>
            <person name="Kariminejad A."/>
        </authorList>
    </citation>
    <scope>VARIANTS OFD6 ALA-1180; PRO-1199; GLU-1200 AND 2154-GLN--LEU-3197 DEL</scope>
    <scope>INVOLVEMENT IN OFD6</scope>
</reference>
<reference key="16">
    <citation type="journal article" date="2022" name="J. Cell. Mol. Med.">
        <title>Whole-exome sequencing identified novel variants in CPLANE1 that causes oral-facial-digital syndrome by inducing primary cilia abnormality.</title>
        <authorList>
            <person name="Qian W."/>
            <person name="Liu X."/>
            <person name="Wang Z."/>
            <person name="Xu Y."/>
            <person name="Zhang J."/>
            <person name="Li H."/>
            <person name="Zhong Q."/>
            <person name="Li C."/>
            <person name="Zhu L."/>
            <person name="Zhou Z."/>
            <person name="Pan W."/>
        </authorList>
    </citation>
    <scope>VARIANT OFD6 VAL-1200</scope>
    <scope>INVOLVEMENT IN OFD6</scope>
    <scope>FUNCTION</scope>
</reference>
<organism>
    <name type="scientific">Homo sapiens</name>
    <name type="common">Human</name>
    <dbReference type="NCBI Taxonomy" id="9606"/>
    <lineage>
        <taxon>Eukaryota</taxon>
        <taxon>Metazoa</taxon>
        <taxon>Chordata</taxon>
        <taxon>Craniata</taxon>
        <taxon>Vertebrata</taxon>
        <taxon>Euteleostomi</taxon>
        <taxon>Mammalia</taxon>
        <taxon>Eutheria</taxon>
        <taxon>Euarchontoglires</taxon>
        <taxon>Primates</taxon>
        <taxon>Haplorrhini</taxon>
        <taxon>Catarrhini</taxon>
        <taxon>Hominidae</taxon>
        <taxon>Homo</taxon>
    </lineage>
</organism>
<comment type="function">
    <text evidence="1 15 18">Involved in ciliogenesis (PubMed:25877302, PubMed:35582950). Involved in the establishment of cell polarity required for directional cell migration. Proposed to act in association with the CPLANE (ciliogenesis and planar polarity effectors) complex. Involved in recruitment of peripheral IFT-A proteins to basal bodies (By similarity).</text>
</comment>
<comment type="subunit">
    <text evidence="1">Interacts with FUZ; INTU and WDPCP; the interactors are proposed to form the core CPLANE (ciliogenesis and planar polarity effectors) complex.</text>
</comment>
<comment type="subcellular location">
    <subcellularLocation>
        <location evidence="17">Membrane</location>
        <topology evidence="17">Multi-pass membrane protein</topology>
    </subcellularLocation>
    <subcellularLocation>
        <location evidence="1">Cell projection</location>
        <location evidence="1">Cilium</location>
    </subcellularLocation>
    <text evidence="1">Localizes to the ciliary transition zone.</text>
</comment>
<comment type="alternative products">
    <event type="alternative splicing"/>
    <isoform>
        <id>Q9H799-1</id>
        <name>1</name>
        <sequence type="displayed"/>
    </isoform>
    <isoform>
        <id>Q9H799-5</id>
        <name>2</name>
        <sequence type="described" ref="VSP_044052 VSP_044053 VSP_044054 VSP_044055"/>
    </isoform>
</comment>
<comment type="disease" evidence="6 7 12">
    <disease id="DI-03439">
        <name>Joubert syndrome 17</name>
        <acronym>JBTS17</acronym>
        <description>A disorder presenting with cerebellar ataxia, oculomotor apraxia, hypotonia, neonatal breathing abnormalities and psychomotor delay. Neuroradiologically, it is characterized by cerebellar vermian hypoplasia/aplasia, thickened and reoriented superior cerebellar peduncles, and an abnormally large interpeduncular fossa, giving the appearance of a molar tooth on transaxial slices (molar tooth sign). Additional variable features include retinal dystrophy and renal disease.</description>
        <dbReference type="MIM" id="614615"/>
    </disease>
    <text>The disease is caused by variants affecting the gene represented in this entry.</text>
</comment>
<comment type="disease" evidence="8 9 10 13 14 15">
    <disease id="DI-04278">
        <name>Orofaciodigital syndrome 6</name>
        <acronym>OFD6</acronym>
        <description>A form of orofaciodigital syndrome, a group of heterogeneous disorders characterized by malformations of the oral cavity, face and digits, and associated phenotypic abnormalities that lead to the delineation of various subtypes. OFD6 is characterized by metacarpal abnormalities with central polydactyly, cerebellar abnormalities including the molar tooth sign, tongue hamartomas, additional frenula, and upper lip notch.</description>
        <dbReference type="MIM" id="277170"/>
    </disease>
    <text>The disease is caused by variants affecting the gene represented in this entry.</text>
</comment>
<comment type="sequence caution" evidence="17">
    <conflict type="miscellaneous discrepancy">
        <sequence resource="EMBL-CDS" id="AAH28410"/>
    </conflict>
    <text>Contaminating sequence. Potential poly-A sequence and intronic sequence in 5'.</text>
</comment>
<comment type="sequence caution" evidence="17">
    <conflict type="erroneous initiation">
        <sequence resource="EMBL-CDS" id="AAI44070"/>
    </conflict>
    <text>Truncated N-terminus.</text>
</comment>
<comment type="sequence caution" evidence="17">
    <conflict type="erroneous initiation">
        <sequence resource="EMBL-CDS" id="AAI50595"/>
    </conflict>
    <text>Truncated N-terminus.</text>
</comment>
<comment type="sequence caution" evidence="17">
    <conflict type="erroneous initiation">
        <sequence resource="EMBL-CDS" id="BAB14513"/>
    </conflict>
    <text>Truncated N-terminus.</text>
</comment>
<comment type="sequence caution" evidence="17">
    <conflict type="miscellaneous discrepancy">
        <sequence resource="EMBL-CDS" id="BAB14513"/>
    </conflict>
    <text>Contaminating sequence. Potential intronic sequence in 5'.</text>
</comment>
<comment type="sequence caution" evidence="17">
    <conflict type="erroneous initiation">
        <sequence resource="EMBL-CDS" id="BAB14999"/>
    </conflict>
    <text>Truncated N-terminus.</text>
</comment>
<comment type="sequence caution" evidence="17">
    <conflict type="miscellaneous discrepancy">
        <sequence resource="EMBL-CDS" id="BAB14999"/>
    </conflict>
    <text>Contaminating sequence. Potential poly-A sequence.</text>
</comment>
<comment type="sequence caution" evidence="17">
    <conflict type="erroneous initiation">
        <sequence resource="EMBL-CDS" id="BAB15539"/>
    </conflict>
    <text>Truncated N-terminus.</text>
</comment>
<comment type="sequence caution" evidence="17">
    <conflict type="erroneous initiation">
        <sequence resource="EMBL-CDS" id="BAC04822"/>
    </conflict>
    <text>Truncated N-terminus.</text>
</comment>
<accession>Q9H799</accession>
<accession>A8MUB7</accession>
<accession>B7ZLV7</accession>
<accession>Q4G174</accession>
<accession>Q6DK46</accession>
<accession>Q8N8L4</accession>
<accession>Q9H5T1</accession>
<accession>Q9H8T9</accession>
<dbReference type="EMBL" id="AC008925">
    <property type="status" value="NOT_ANNOTATED_CDS"/>
    <property type="molecule type" value="Genomic_DNA"/>
</dbReference>
<dbReference type="EMBL" id="AC025449">
    <property type="status" value="NOT_ANNOTATED_CDS"/>
    <property type="molecule type" value="Genomic_DNA"/>
</dbReference>
<dbReference type="EMBL" id="BC028410">
    <property type="protein sequence ID" value="AAH28410.1"/>
    <property type="status" value="ALT_SEQ"/>
    <property type="molecule type" value="mRNA"/>
</dbReference>
<dbReference type="EMBL" id="BC074774">
    <property type="protein sequence ID" value="AAH74774.2"/>
    <property type="molecule type" value="mRNA"/>
</dbReference>
<dbReference type="EMBL" id="BC144069">
    <property type="protein sequence ID" value="AAI44070.1"/>
    <property type="status" value="ALT_INIT"/>
    <property type="molecule type" value="mRNA"/>
</dbReference>
<dbReference type="EMBL" id="BC150594">
    <property type="protein sequence ID" value="AAI50595.1"/>
    <property type="status" value="ALT_INIT"/>
    <property type="molecule type" value="mRNA"/>
</dbReference>
<dbReference type="EMBL" id="AK023293">
    <property type="protein sequence ID" value="BAB14513.1"/>
    <property type="status" value="ALT_SEQ"/>
    <property type="molecule type" value="mRNA"/>
</dbReference>
<dbReference type="EMBL" id="AK024779">
    <property type="protein sequence ID" value="BAB14999.1"/>
    <property type="status" value="ALT_SEQ"/>
    <property type="molecule type" value="mRNA"/>
</dbReference>
<dbReference type="EMBL" id="AK026735">
    <property type="protein sequence ID" value="BAB15539.1"/>
    <property type="status" value="ALT_INIT"/>
    <property type="molecule type" value="mRNA"/>
</dbReference>
<dbReference type="EMBL" id="AK096581">
    <property type="protein sequence ID" value="BAC04822.1"/>
    <property type="status" value="ALT_INIT"/>
    <property type="molecule type" value="mRNA"/>
</dbReference>
<dbReference type="CCDS" id="CCDS34146.2">
    <molecule id="Q9H799-1"/>
</dbReference>
<dbReference type="RefSeq" id="NP_075561.3">
    <molecule id="Q9H799-1"/>
    <property type="nucleotide sequence ID" value="NM_023073.3"/>
</dbReference>
<dbReference type="BioGRID" id="122413">
    <property type="interactions" value="22"/>
</dbReference>
<dbReference type="FunCoup" id="Q9H799">
    <property type="interactions" value="296"/>
</dbReference>
<dbReference type="IntAct" id="Q9H799">
    <property type="interactions" value="14"/>
</dbReference>
<dbReference type="MINT" id="Q9H799"/>
<dbReference type="STRING" id="9606.ENSP00000389014"/>
<dbReference type="GlyGen" id="Q9H799">
    <property type="glycosylation" value="3 sites"/>
</dbReference>
<dbReference type="iPTMnet" id="Q9H799"/>
<dbReference type="PhosphoSitePlus" id="Q9H799"/>
<dbReference type="BioMuta" id="C5orf42"/>
<dbReference type="DMDM" id="403314397"/>
<dbReference type="jPOST" id="Q9H799"/>
<dbReference type="MassIVE" id="Q9H799"/>
<dbReference type="PaxDb" id="9606-ENSP00000389014"/>
<dbReference type="PeptideAtlas" id="Q9H799"/>
<dbReference type="ProteomicsDB" id="81091">
    <molecule id="Q9H799-1"/>
</dbReference>
<dbReference type="Pumba" id="Q9H799"/>
<dbReference type="Antibodypedia" id="51274">
    <property type="antibodies" value="42 antibodies from 7 providers"/>
</dbReference>
<dbReference type="DNASU" id="65250"/>
<dbReference type="Ensembl" id="ENST00000508244.5">
    <molecule id="Q9H799-1"/>
    <property type="protein sequence ID" value="ENSP00000421690.1"/>
    <property type="gene ID" value="ENSG00000197603.16"/>
</dbReference>
<dbReference type="GeneID" id="65250"/>
<dbReference type="KEGG" id="hsa:65250"/>
<dbReference type="UCSC" id="uc011cpa.1">
    <molecule id="Q9H799-1"/>
    <property type="organism name" value="human"/>
</dbReference>
<dbReference type="AGR" id="HGNC:25801"/>
<dbReference type="CTD" id="65250"/>
<dbReference type="DisGeNET" id="65250"/>
<dbReference type="GeneCards" id="CPLANE1"/>
<dbReference type="GeneReviews" id="CPLANE1"/>
<dbReference type="HGNC" id="HGNC:25801">
    <property type="gene designation" value="CPLANE1"/>
</dbReference>
<dbReference type="HPA" id="ENSG00000197603">
    <property type="expression patterns" value="Low tissue specificity"/>
</dbReference>
<dbReference type="MalaCards" id="CPLANE1"/>
<dbReference type="MIM" id="277170">
    <property type="type" value="phenotype"/>
</dbReference>
<dbReference type="MIM" id="614571">
    <property type="type" value="gene"/>
</dbReference>
<dbReference type="MIM" id="614615">
    <property type="type" value="phenotype"/>
</dbReference>
<dbReference type="neXtProt" id="NX_Q9H799"/>
<dbReference type="OpenTargets" id="ENSG00000197603"/>
<dbReference type="Orphanet" id="475">
    <property type="disease" value="Joubert syndrome"/>
</dbReference>
<dbReference type="Orphanet" id="65684">
    <property type="disease" value="Monomelic amyotrophy"/>
</dbReference>
<dbReference type="Orphanet" id="2754">
    <property type="disease" value="Orofaciodigital syndrome type 6"/>
</dbReference>
<dbReference type="PharmGKB" id="PA162380188"/>
<dbReference type="VEuPathDB" id="HostDB:ENSG00000197603"/>
<dbReference type="eggNOG" id="ENOG502QRD2">
    <property type="taxonomic scope" value="Eukaryota"/>
</dbReference>
<dbReference type="GeneTree" id="ENSGT00800000124150"/>
<dbReference type="HOGENOM" id="CLU_226347_0_0_1"/>
<dbReference type="InParanoid" id="Q9H799"/>
<dbReference type="OMA" id="QYWDVRY"/>
<dbReference type="OrthoDB" id="5974632at2759"/>
<dbReference type="PAN-GO" id="Q9H799">
    <property type="GO annotations" value="2 GO annotations based on evolutionary models"/>
</dbReference>
<dbReference type="PhylomeDB" id="Q9H799"/>
<dbReference type="TreeFam" id="TF351288"/>
<dbReference type="PathwayCommons" id="Q9H799"/>
<dbReference type="SignaLink" id="Q9H799"/>
<dbReference type="BioGRID-ORCS" id="65250">
    <property type="hits" value="6 hits in 1138 CRISPR screens"/>
</dbReference>
<dbReference type="ChiTaRS" id="C5orf42">
    <property type="organism name" value="human"/>
</dbReference>
<dbReference type="GeneWiki" id="C5orf42"/>
<dbReference type="GenomeRNAi" id="65250"/>
<dbReference type="Pharos" id="Q9H799">
    <property type="development level" value="Tbio"/>
</dbReference>
<dbReference type="PRO" id="PR:Q9H799"/>
<dbReference type="Proteomes" id="UP000005640">
    <property type="component" value="Chromosome 5"/>
</dbReference>
<dbReference type="RNAct" id="Q9H799">
    <property type="molecule type" value="protein"/>
</dbReference>
<dbReference type="Bgee" id="ENSG00000197603">
    <property type="expression patterns" value="Expressed in sural nerve and 117 other cell types or tissues"/>
</dbReference>
<dbReference type="ExpressionAtlas" id="Q9H799">
    <property type="expression patterns" value="baseline and differential"/>
</dbReference>
<dbReference type="GO" id="GO:0035869">
    <property type="term" value="C:ciliary transition zone"/>
    <property type="evidence" value="ECO:0000318"/>
    <property type="project" value="GO_Central"/>
</dbReference>
<dbReference type="GO" id="GO:0016020">
    <property type="term" value="C:membrane"/>
    <property type="evidence" value="ECO:0007669"/>
    <property type="project" value="UniProtKB-SubCell"/>
</dbReference>
<dbReference type="GO" id="GO:0060271">
    <property type="term" value="P:cilium assembly"/>
    <property type="evidence" value="ECO:0000315"/>
    <property type="project" value="GO_Central"/>
</dbReference>
<dbReference type="InterPro" id="IPR028236">
    <property type="entry name" value="CPLANE1"/>
</dbReference>
<dbReference type="InterPro" id="IPR036322">
    <property type="entry name" value="WD40_repeat_dom_sf"/>
</dbReference>
<dbReference type="PANTHER" id="PTHR14492:SF4">
    <property type="entry name" value="CILIOGENESIS AND PLANAR POLARITY EFFECTOR 1"/>
    <property type="match status" value="1"/>
</dbReference>
<dbReference type="PANTHER" id="PTHR14492">
    <property type="entry name" value="JBTS17"/>
    <property type="match status" value="1"/>
</dbReference>
<dbReference type="Pfam" id="PF15392">
    <property type="entry name" value="Joubert"/>
    <property type="match status" value="1"/>
</dbReference>
<dbReference type="SUPFAM" id="SSF50978">
    <property type="entry name" value="WD40 repeat-like"/>
    <property type="match status" value="1"/>
</dbReference>
<gene>
    <name evidence="19" type="primary">CPLANE1</name>
    <name type="synonym">C5orf42</name>
    <name evidence="19" type="synonym">JBTS17</name>
</gene>